<dbReference type="EMBL" id="AY647534">
    <property type="protein sequence ID" value="AAT65676.1"/>
    <property type="molecule type" value="Genomic_DNA"/>
</dbReference>
<dbReference type="GO" id="GO:0009507">
    <property type="term" value="C:chloroplast"/>
    <property type="evidence" value="ECO:0007669"/>
    <property type="project" value="UniProtKB-SubCell"/>
</dbReference>
<dbReference type="GO" id="GO:0003723">
    <property type="term" value="F:RNA binding"/>
    <property type="evidence" value="ECO:0007669"/>
    <property type="project" value="UniProtKB-KW"/>
</dbReference>
<dbReference type="GO" id="GO:0006397">
    <property type="term" value="P:mRNA processing"/>
    <property type="evidence" value="ECO:0007669"/>
    <property type="project" value="UniProtKB-KW"/>
</dbReference>
<dbReference type="GO" id="GO:0008380">
    <property type="term" value="P:RNA splicing"/>
    <property type="evidence" value="ECO:0007669"/>
    <property type="project" value="UniProtKB-UniRule"/>
</dbReference>
<dbReference type="GO" id="GO:0008033">
    <property type="term" value="P:tRNA processing"/>
    <property type="evidence" value="ECO:0007669"/>
    <property type="project" value="UniProtKB-KW"/>
</dbReference>
<dbReference type="HAMAP" id="MF_01390">
    <property type="entry name" value="MatK"/>
    <property type="match status" value="1"/>
</dbReference>
<dbReference type="InterPro" id="IPR024937">
    <property type="entry name" value="Domain_X"/>
</dbReference>
<dbReference type="InterPro" id="IPR002866">
    <property type="entry name" value="Maturase_MatK"/>
</dbReference>
<dbReference type="InterPro" id="IPR024942">
    <property type="entry name" value="Maturase_MatK_N"/>
</dbReference>
<dbReference type="PANTHER" id="PTHR34811">
    <property type="entry name" value="MATURASE K"/>
    <property type="match status" value="1"/>
</dbReference>
<dbReference type="PANTHER" id="PTHR34811:SF1">
    <property type="entry name" value="MATURASE K"/>
    <property type="match status" value="1"/>
</dbReference>
<dbReference type="Pfam" id="PF01348">
    <property type="entry name" value="Intron_maturas2"/>
    <property type="match status" value="1"/>
</dbReference>
<dbReference type="Pfam" id="PF01824">
    <property type="entry name" value="MatK_N"/>
    <property type="match status" value="1"/>
</dbReference>
<comment type="function">
    <text evidence="1">Usually encoded in the trnK tRNA gene intron. Probably assists in splicing its own and other chloroplast group II introns.</text>
</comment>
<comment type="subcellular location">
    <subcellularLocation>
        <location>Plastid</location>
        <location>Chloroplast</location>
    </subcellularLocation>
</comment>
<comment type="similarity">
    <text evidence="1">Belongs to the intron maturase 2 family. MatK subfamily.</text>
</comment>
<accession>Q6DT83</accession>
<gene>
    <name evidence="1" type="primary">matK</name>
</gene>
<proteinExistence type="inferred from homology"/>
<organism>
    <name type="scientific">Hottonia palustris</name>
    <name type="common">Water-violet</name>
    <dbReference type="NCBI Taxonomy" id="175037"/>
    <lineage>
        <taxon>Eukaryota</taxon>
        <taxon>Viridiplantae</taxon>
        <taxon>Streptophyta</taxon>
        <taxon>Embryophyta</taxon>
        <taxon>Tracheophyta</taxon>
        <taxon>Spermatophyta</taxon>
        <taxon>Magnoliopsida</taxon>
        <taxon>eudicotyledons</taxon>
        <taxon>Gunneridae</taxon>
        <taxon>Pentapetalae</taxon>
        <taxon>asterids</taxon>
        <taxon>Ericales</taxon>
        <taxon>Primulaceae</taxon>
        <taxon>Hottonia</taxon>
    </lineage>
</organism>
<protein>
    <recommendedName>
        <fullName evidence="1">Maturase K</fullName>
    </recommendedName>
    <alternativeName>
        <fullName evidence="1">Intron maturase</fullName>
    </alternativeName>
</protein>
<reference key="1">
    <citation type="journal article" date="2004" name="Am. J. Bot.">
        <title>Buzz-pollinated Dodecatheon originated from within the heterostylous Primula subgenus Auriculastrum (Primulaceae): a seven-region cpDNA phylogeny and its implications for floral evolution.</title>
        <authorList>
            <person name="Mast A.R."/>
            <person name="Feller D.M.S."/>
            <person name="Kelso S."/>
            <person name="Conti E."/>
        </authorList>
        <dbReference type="AGRICOLA" id="IND43645016"/>
    </citation>
    <scope>NUCLEOTIDE SEQUENCE [GENOMIC DNA]</scope>
</reference>
<feature type="chain" id="PRO_0000143427" description="Maturase K">
    <location>
        <begin position="1"/>
        <end position="509"/>
    </location>
</feature>
<name>MATK_HOTPA</name>
<evidence type="ECO:0000255" key="1">
    <source>
        <dbReference type="HAMAP-Rule" id="MF_01390"/>
    </source>
</evidence>
<sequence>MEEFKRYLELDRSQQHDFLYPLIFQEYIYALAHDHSLTTSSSLELEKAGYENNSSLLIVKRLIIHLITQMDHFGFFTNYSSQNPFLGHNTTLYSQILLEGFVVVVEIPFSIRIISSLDLEGKEIVKSHNFRSIHSIFPFLEDKFSHLNYVLDLLIPHSIHLEILVQTFRYWVKDASSLHLLRTFLHKYHNWTNLITPKKSRFSFSKQNKRFLFFFSNFHVYEYESILAFLRNQSSHLHSKSYRPFLDRIYFYEKRDHFVKVFTKYFQAILWSFKDPFMHYVRYQGKALLASKGTFLLMNKWNYYLVNFWQCYFYMWSQPGRIHINKLSNHYLELLGYLSSVGLNSSMVRNQMLENSFLIANVSKKFDMIVPIIPLIRSLSKAKFCNLLGHPISKPVWADLSDSDIIDRFGSIYRNISHYYSGSSKKMSLYRIKYIIKLSCARTLARKHKSTVRAFLKRVGSELLEEFFFEDEFIFSLTFPKASSSSGGLYRTRIWYLDIFCIHDLANYE</sequence>
<keyword id="KW-0150">Chloroplast</keyword>
<keyword id="KW-0507">mRNA processing</keyword>
<keyword id="KW-0934">Plastid</keyword>
<keyword id="KW-0694">RNA-binding</keyword>
<keyword id="KW-0819">tRNA processing</keyword>
<geneLocation type="chloroplast"/>